<keyword id="KW-0963">Cytoplasm</keyword>
<keyword id="KW-0227">DNA damage</keyword>
<keyword id="KW-0233">DNA recombination</keyword>
<keyword id="KW-0234">DNA repair</keyword>
<keyword id="KW-0255">Endonuclease</keyword>
<keyword id="KW-0378">Hydrolase</keyword>
<keyword id="KW-0460">Magnesium</keyword>
<keyword id="KW-0479">Metal-binding</keyword>
<keyword id="KW-0540">Nuclease</keyword>
<evidence type="ECO:0000255" key="1">
    <source>
        <dbReference type="HAMAP-Rule" id="MF_00130"/>
    </source>
</evidence>
<evidence type="ECO:0000256" key="2">
    <source>
        <dbReference type="SAM" id="MobiDB-lite"/>
    </source>
</evidence>
<accession>C3L8N9</accession>
<proteinExistence type="inferred from homology"/>
<name>RECU_BACAC</name>
<dbReference type="EC" id="3.1.21.10" evidence="1"/>
<dbReference type="EMBL" id="CP001215">
    <property type="protein sequence ID" value="ACP17044.1"/>
    <property type="molecule type" value="Genomic_DNA"/>
</dbReference>
<dbReference type="RefSeq" id="WP_000155594.1">
    <property type="nucleotide sequence ID" value="NC_012581.1"/>
</dbReference>
<dbReference type="SMR" id="C3L8N9"/>
<dbReference type="GeneID" id="45021545"/>
<dbReference type="KEGG" id="bah:BAMEG_3022"/>
<dbReference type="HOGENOM" id="CLU_096340_0_0_9"/>
<dbReference type="GO" id="GO:0005737">
    <property type="term" value="C:cytoplasm"/>
    <property type="evidence" value="ECO:0007669"/>
    <property type="project" value="UniProtKB-SubCell"/>
</dbReference>
<dbReference type="GO" id="GO:0004519">
    <property type="term" value="F:endonuclease activity"/>
    <property type="evidence" value="ECO:0007669"/>
    <property type="project" value="UniProtKB-UniRule"/>
</dbReference>
<dbReference type="GO" id="GO:0000287">
    <property type="term" value="F:magnesium ion binding"/>
    <property type="evidence" value="ECO:0007669"/>
    <property type="project" value="UniProtKB-UniRule"/>
</dbReference>
<dbReference type="GO" id="GO:0003676">
    <property type="term" value="F:nucleic acid binding"/>
    <property type="evidence" value="ECO:0007669"/>
    <property type="project" value="InterPro"/>
</dbReference>
<dbReference type="GO" id="GO:0007059">
    <property type="term" value="P:chromosome segregation"/>
    <property type="evidence" value="ECO:0007669"/>
    <property type="project" value="UniProtKB-UniRule"/>
</dbReference>
<dbReference type="GO" id="GO:0006310">
    <property type="term" value="P:DNA recombination"/>
    <property type="evidence" value="ECO:0007669"/>
    <property type="project" value="UniProtKB-UniRule"/>
</dbReference>
<dbReference type="GO" id="GO:0006281">
    <property type="term" value="P:DNA repair"/>
    <property type="evidence" value="ECO:0007669"/>
    <property type="project" value="UniProtKB-UniRule"/>
</dbReference>
<dbReference type="CDD" id="cd22354">
    <property type="entry name" value="RecU-like"/>
    <property type="match status" value="1"/>
</dbReference>
<dbReference type="Gene3D" id="3.40.1350.10">
    <property type="match status" value="1"/>
</dbReference>
<dbReference type="HAMAP" id="MF_00130">
    <property type="entry name" value="RecU"/>
    <property type="match status" value="1"/>
</dbReference>
<dbReference type="InterPro" id="IPR004612">
    <property type="entry name" value="Resolv_RecU"/>
</dbReference>
<dbReference type="InterPro" id="IPR011335">
    <property type="entry name" value="Restrct_endonuc-II-like"/>
</dbReference>
<dbReference type="InterPro" id="IPR011856">
    <property type="entry name" value="tRNA_endonuc-like_dom_sf"/>
</dbReference>
<dbReference type="NCBIfam" id="NF002581">
    <property type="entry name" value="PRK02234.1-2"/>
    <property type="match status" value="1"/>
</dbReference>
<dbReference type="NCBIfam" id="NF002584">
    <property type="entry name" value="PRK02234.1-5"/>
    <property type="match status" value="1"/>
</dbReference>
<dbReference type="NCBIfam" id="NF002585">
    <property type="entry name" value="PRK02234.1-6"/>
    <property type="match status" value="1"/>
</dbReference>
<dbReference type="NCBIfam" id="TIGR00648">
    <property type="entry name" value="recU"/>
    <property type="match status" value="1"/>
</dbReference>
<dbReference type="Pfam" id="PF03838">
    <property type="entry name" value="RecU"/>
    <property type="match status" value="1"/>
</dbReference>
<dbReference type="PIRSF" id="PIRSF037785">
    <property type="entry name" value="RecU"/>
    <property type="match status" value="1"/>
</dbReference>
<dbReference type="SUPFAM" id="SSF52980">
    <property type="entry name" value="Restriction endonuclease-like"/>
    <property type="match status" value="1"/>
</dbReference>
<organism>
    <name type="scientific">Bacillus anthracis (strain CDC 684 / NRRL 3495)</name>
    <dbReference type="NCBI Taxonomy" id="568206"/>
    <lineage>
        <taxon>Bacteria</taxon>
        <taxon>Bacillati</taxon>
        <taxon>Bacillota</taxon>
        <taxon>Bacilli</taxon>
        <taxon>Bacillales</taxon>
        <taxon>Bacillaceae</taxon>
        <taxon>Bacillus</taxon>
        <taxon>Bacillus cereus group</taxon>
    </lineage>
</organism>
<reference key="1">
    <citation type="submission" date="2008-10" db="EMBL/GenBank/DDBJ databases">
        <title>Genome sequence of Bacillus anthracis str. CDC 684.</title>
        <authorList>
            <person name="Dodson R.J."/>
            <person name="Munk A.C."/>
            <person name="Brettin T."/>
            <person name="Bruce D."/>
            <person name="Detter C."/>
            <person name="Tapia R."/>
            <person name="Han C."/>
            <person name="Sutton G."/>
            <person name="Sims D."/>
        </authorList>
    </citation>
    <scope>NUCLEOTIDE SEQUENCE [LARGE SCALE GENOMIC DNA]</scope>
    <source>
        <strain>CDC 684 / NRRL 3495</strain>
    </source>
</reference>
<protein>
    <recommendedName>
        <fullName evidence="1">Holliday junction resolvase RecU</fullName>
        <ecNumber evidence="1">3.1.21.10</ecNumber>
    </recommendedName>
    <alternativeName>
        <fullName evidence="1">Recombination protein U homolog</fullName>
    </alternativeName>
</protein>
<gene>
    <name evidence="1" type="primary">recU</name>
    <name type="ordered locus">BAMEG_3022</name>
</gene>
<sequence>MTIRYPNGKRYNQASQPHKTPIKKHTYSNRGMSLEEELNETNEYYLTHNIACVHKKPTPLQIVKVDYPARSAAVVKEAYFKQPSTTDYNGVYKGKYIDFEAKETKNKTSFPLQNFHLHQIEHMKQVIAHNGIAFVIIKFTLFDELYLLDAKHIITFWNRQNTGGRKSITKEEIVEHGSLLSCGYHPRIDYIRVLDTVYFS</sequence>
<feature type="chain" id="PRO_1000193437" description="Holliday junction resolvase RecU">
    <location>
        <begin position="1"/>
        <end position="200"/>
    </location>
</feature>
<feature type="region of interest" description="Disordered" evidence="2">
    <location>
        <begin position="1"/>
        <end position="25"/>
    </location>
</feature>
<feature type="binding site" evidence="1">
    <location>
        <position position="85"/>
    </location>
    <ligand>
        <name>Mg(2+)</name>
        <dbReference type="ChEBI" id="CHEBI:18420"/>
    </ligand>
</feature>
<feature type="binding site" evidence="1">
    <location>
        <position position="87"/>
    </location>
    <ligand>
        <name>Mg(2+)</name>
        <dbReference type="ChEBI" id="CHEBI:18420"/>
    </ligand>
</feature>
<feature type="binding site" evidence="1">
    <location>
        <position position="100"/>
    </location>
    <ligand>
        <name>Mg(2+)</name>
        <dbReference type="ChEBI" id="CHEBI:18420"/>
    </ligand>
</feature>
<feature type="binding site" evidence="1">
    <location>
        <position position="119"/>
    </location>
    <ligand>
        <name>Mg(2+)</name>
        <dbReference type="ChEBI" id="CHEBI:18420"/>
    </ligand>
</feature>
<feature type="site" description="Transition state stabilizer" evidence="1">
    <location>
        <position position="102"/>
    </location>
</feature>
<comment type="function">
    <text evidence="1">Endonuclease that resolves Holliday junction intermediates in genetic recombination. Cleaves mobile four-strand junctions by introducing symmetrical nicks in paired strands. Promotes annealing of linear ssDNA with homologous dsDNA. Required for DNA repair, homologous recombination and chromosome segregation.</text>
</comment>
<comment type="catalytic activity">
    <reaction evidence="1">
        <text>Endonucleolytic cleavage at a junction such as a reciprocal single-stranded crossover between two homologous DNA duplexes (Holliday junction).</text>
        <dbReference type="EC" id="3.1.21.10"/>
    </reaction>
</comment>
<comment type="cofactor">
    <cofactor evidence="1">
        <name>Mg(2+)</name>
        <dbReference type="ChEBI" id="CHEBI:18420"/>
    </cofactor>
    <text evidence="1">Binds 1 Mg(2+) ion per subunit.</text>
</comment>
<comment type="subcellular location">
    <subcellularLocation>
        <location evidence="1">Cytoplasm</location>
    </subcellularLocation>
</comment>
<comment type="similarity">
    <text evidence="1">Belongs to the RecU family.</text>
</comment>